<comment type="function">
    <text evidence="2">Cytochrome P450 enzyme involved in the biosynthesis of oxylipin jasmonates, important phytohormones acting as growth regulators and signaling molecules for plant defense. Functions as an allene oxide synthase that converts hydroperoxy fatty acids to unstable allene epoxides. Catalyzes the dehydration of 13-HPOTE ((13S)-hydroperoxy-(9Z,11E,15Z)-octadecatrienoate), as well as 13-HPODE ((13S)-hydroperoxy-(9Z,11E)-octadecadienoate).</text>
</comment>
<comment type="catalytic activity">
    <reaction evidence="2">
        <text>(13S)-hydroperoxy-(9Z,11E,15Z)-octadecatrienoate = (9Z,13S,15Z)-12,13-epoxyoctadeca-9,11,15-trienoate + H2O</text>
        <dbReference type="Rhea" id="RHEA:25074"/>
        <dbReference type="ChEBI" id="CHEBI:15377"/>
        <dbReference type="ChEBI" id="CHEBI:36438"/>
        <dbReference type="ChEBI" id="CHEBI:58757"/>
        <dbReference type="EC" id="4.2.1.92"/>
    </reaction>
    <physiologicalReaction direction="left-to-right" evidence="2">
        <dbReference type="Rhea" id="RHEA:25075"/>
    </physiologicalReaction>
</comment>
<comment type="catalytic activity">
    <reaction evidence="2">
        <text>(13S)-hydroperoxy-(9Z,11E)-octadecadienoate = (9Z,13S)-12,13-epoxyoctadeca-9,11-dienoate + H2O</text>
        <dbReference type="Rhea" id="RHEA:84075"/>
        <dbReference type="ChEBI" id="CHEBI:15377"/>
        <dbReference type="ChEBI" id="CHEBI:57465"/>
        <dbReference type="ChEBI" id="CHEBI:57466"/>
    </reaction>
    <physiologicalReaction direction="left-to-right" evidence="2">
        <dbReference type="Rhea" id="RHEA:84076"/>
    </physiologicalReaction>
</comment>
<comment type="cofactor">
    <cofactor evidence="2">
        <name>heme b</name>
        <dbReference type="ChEBI" id="CHEBI:60344"/>
    </cofactor>
</comment>
<comment type="pathway">
    <text evidence="2">Lipid metabolism; oxylipin biosynthesis.</text>
</comment>
<comment type="subcellular location">
    <subcellularLocation>
        <location evidence="3">Plastid</location>
        <location evidence="3">Chloroplast</location>
    </subcellularLocation>
</comment>
<comment type="similarity">
    <text evidence="3">Belongs to the cytochrome P450 family.</text>
</comment>
<organism>
    <name type="scientific">Linum usitatissimum</name>
    <name type="common">Flax</name>
    <name type="synonym">Linum humile</name>
    <dbReference type="NCBI Taxonomy" id="4006"/>
    <lineage>
        <taxon>Eukaryota</taxon>
        <taxon>Viridiplantae</taxon>
        <taxon>Streptophyta</taxon>
        <taxon>Embryophyta</taxon>
        <taxon>Tracheophyta</taxon>
        <taxon>Spermatophyta</taxon>
        <taxon>Magnoliopsida</taxon>
        <taxon>eudicotyledons</taxon>
        <taxon>Gunneridae</taxon>
        <taxon>Pentapetalae</taxon>
        <taxon>rosids</taxon>
        <taxon>fabids</taxon>
        <taxon>Malpighiales</taxon>
        <taxon>Linaceae</taxon>
        <taxon>Linum</taxon>
    </lineage>
</organism>
<gene>
    <name type="primary">CYP74A</name>
    <name type="synonym">CYP74</name>
</gene>
<feature type="transit peptide" description="Chloroplast">
    <location>
        <begin position="1"/>
        <end position="58"/>
    </location>
</feature>
<feature type="chain" id="PRO_0000003626" description="Allene oxide synthase, chloroplastic">
    <location>
        <begin position="59"/>
        <end position="536"/>
    </location>
</feature>
<feature type="binding site" evidence="2">
    <location>
        <position position="151"/>
    </location>
    <ligand>
        <name>heme b</name>
        <dbReference type="ChEBI" id="CHEBI:60344"/>
    </ligand>
</feature>
<feature type="binding site" evidence="2">
    <location>
        <position position="182"/>
    </location>
    <ligand>
        <name>heme b</name>
        <dbReference type="ChEBI" id="CHEBI:60344"/>
    </ligand>
</feature>
<feature type="binding site" evidence="2">
    <location>
        <position position="186"/>
    </location>
    <ligand>
        <name>heme b</name>
        <dbReference type="ChEBI" id="CHEBI:60344"/>
    </ligand>
</feature>
<feature type="binding site" evidence="1">
    <location>
        <position position="262"/>
    </location>
    <ligand>
        <name>(13S)-hydroperoxy-(9Z,11E)-octadecadienoate</name>
        <dbReference type="ChEBI" id="CHEBI:57466"/>
    </ligand>
</feature>
<feature type="binding site" evidence="2">
    <location>
        <position position="339"/>
    </location>
    <ligand>
        <name>(13S)-hydroperoxy-(9Z,11E)-octadecadienoate</name>
        <dbReference type="ChEBI" id="CHEBI:57466"/>
    </ligand>
</feature>
<feature type="binding site" evidence="2">
    <location>
        <position position="339"/>
    </location>
    <ligand>
        <name>(13S)-hydroperoxy-(9Z,11E,15Z)-octadecatrienoate</name>
        <dbReference type="ChEBI" id="CHEBI:58757"/>
    </ligand>
</feature>
<feature type="binding site" evidence="1">
    <location>
        <position position="345"/>
    </location>
    <ligand>
        <name>(13S)-hydroperoxy-(9Z,11E)-octadecadienoate</name>
        <dbReference type="ChEBI" id="CHEBI:57466"/>
    </ligand>
</feature>
<feature type="binding site" evidence="2">
    <location>
        <position position="487"/>
    </location>
    <ligand>
        <name>heme b</name>
        <dbReference type="ChEBI" id="CHEBI:60344"/>
    </ligand>
</feature>
<feature type="binding site" description="axial binding residue" evidence="2">
    <location>
        <position position="489"/>
    </location>
    <ligand>
        <name>heme b</name>
        <dbReference type="ChEBI" id="CHEBI:60344"/>
    </ligand>
    <ligandPart>
        <name>Fe</name>
        <dbReference type="ChEBI" id="CHEBI:18248"/>
    </ligandPart>
</feature>
<feature type="sequence variant">
    <original>S</original>
    <variation>T</variation>
    <location>
        <position position="525"/>
    </location>
</feature>
<name>CP74_LINUS</name>
<protein>
    <recommendedName>
        <fullName>Allene oxide synthase, chloroplastic</fullName>
        <ecNumber evidence="2">4.2.1.92</ecNumber>
    </recommendedName>
    <alternativeName>
        <fullName>Cytochrome P450 74A</fullName>
    </alternativeName>
    <alternativeName>
        <fullName>Hydroperoxide dehydratase</fullName>
    </alternativeName>
</protein>
<reference key="1">
    <citation type="journal article" date="1993" name="Proc. Natl. Acad. Sci. U.S.A.">
        <title>Molecular cloning of an allene oxide synthase: a cytochrome P450 specialized for the metabolism of fatty acid hydroperoxides.</title>
        <authorList>
            <person name="Song W.-C."/>
            <person name="Funk C.D."/>
            <person name="Brash A.R."/>
        </authorList>
    </citation>
    <scope>NUCLEOTIDE SEQUENCE [MRNA]</scope>
    <scope>PARTIAL PROTEIN SEQUENCE</scope>
    <source>
        <tissue>Embryo</tissue>
    </source>
</reference>
<proteinExistence type="evidence at protein level"/>
<accession>P48417</accession>
<evidence type="ECO:0000250" key="1">
    <source>
        <dbReference type="UniProtKB" id="Q40778"/>
    </source>
</evidence>
<evidence type="ECO:0000250" key="2">
    <source>
        <dbReference type="UniProtKB" id="Q96242"/>
    </source>
</evidence>
<evidence type="ECO:0000305" key="3"/>
<keyword id="KW-0150">Chloroplast</keyword>
<keyword id="KW-0903">Direct protein sequencing</keyword>
<keyword id="KW-0275">Fatty acid biosynthesis</keyword>
<keyword id="KW-0276">Fatty acid metabolism</keyword>
<keyword id="KW-0349">Heme</keyword>
<keyword id="KW-0408">Iron</keyword>
<keyword id="KW-0444">Lipid biosynthesis</keyword>
<keyword id="KW-0443">Lipid metabolism</keyword>
<keyword id="KW-0456">Lyase</keyword>
<keyword id="KW-0479">Metal-binding</keyword>
<keyword id="KW-0925">Oxylipin biosynthesis</keyword>
<keyword id="KW-0934">Plastid</keyword>
<keyword id="KW-0809">Transit peptide</keyword>
<dbReference type="EC" id="4.2.1.92" evidence="2"/>
<dbReference type="EMBL" id="U00428">
    <property type="protein sequence ID" value="AAA03353.1"/>
    <property type="molecule type" value="mRNA"/>
</dbReference>
<dbReference type="SMR" id="P48417"/>
<dbReference type="UniPathway" id="UPA00382"/>
<dbReference type="GO" id="GO:0009941">
    <property type="term" value="C:chloroplast envelope"/>
    <property type="evidence" value="ECO:0007669"/>
    <property type="project" value="TreeGrafter"/>
</dbReference>
<dbReference type="GO" id="GO:0009535">
    <property type="term" value="C:chloroplast thylakoid membrane"/>
    <property type="evidence" value="ECO:0007669"/>
    <property type="project" value="TreeGrafter"/>
</dbReference>
<dbReference type="GO" id="GO:0009978">
    <property type="term" value="F:allene oxide synthase activity"/>
    <property type="evidence" value="ECO:0007669"/>
    <property type="project" value="UniProtKB-EC"/>
</dbReference>
<dbReference type="GO" id="GO:0020037">
    <property type="term" value="F:heme binding"/>
    <property type="evidence" value="ECO:0007669"/>
    <property type="project" value="InterPro"/>
</dbReference>
<dbReference type="GO" id="GO:0005506">
    <property type="term" value="F:iron ion binding"/>
    <property type="evidence" value="ECO:0007669"/>
    <property type="project" value="InterPro"/>
</dbReference>
<dbReference type="GO" id="GO:0004497">
    <property type="term" value="F:monooxygenase activity"/>
    <property type="evidence" value="ECO:0007669"/>
    <property type="project" value="InterPro"/>
</dbReference>
<dbReference type="GO" id="GO:0016705">
    <property type="term" value="F:oxidoreductase activity, acting on paired donors, with incorporation or reduction of molecular oxygen"/>
    <property type="evidence" value="ECO:0007669"/>
    <property type="project" value="InterPro"/>
</dbReference>
<dbReference type="GO" id="GO:0009695">
    <property type="term" value="P:jasmonic acid biosynthetic process"/>
    <property type="evidence" value="ECO:0007669"/>
    <property type="project" value="TreeGrafter"/>
</dbReference>
<dbReference type="GO" id="GO:0031408">
    <property type="term" value="P:oxylipin biosynthetic process"/>
    <property type="evidence" value="ECO:0007669"/>
    <property type="project" value="UniProtKB-UniPathway"/>
</dbReference>
<dbReference type="GO" id="GO:0016125">
    <property type="term" value="P:sterol metabolic process"/>
    <property type="evidence" value="ECO:0007669"/>
    <property type="project" value="TreeGrafter"/>
</dbReference>
<dbReference type="CDD" id="cd11071">
    <property type="entry name" value="CYP74"/>
    <property type="match status" value="1"/>
</dbReference>
<dbReference type="FunFam" id="1.10.630.10:FF:000024">
    <property type="entry name" value="Allene oxide synthase, chloroplastic"/>
    <property type="match status" value="1"/>
</dbReference>
<dbReference type="Gene3D" id="1.10.630.10">
    <property type="entry name" value="Cytochrome P450"/>
    <property type="match status" value="1"/>
</dbReference>
<dbReference type="InterPro" id="IPR001128">
    <property type="entry name" value="Cyt_P450"/>
</dbReference>
<dbReference type="InterPro" id="IPR002403">
    <property type="entry name" value="Cyt_P450_E_grp-IV"/>
</dbReference>
<dbReference type="InterPro" id="IPR036396">
    <property type="entry name" value="Cyt_P450_sf"/>
</dbReference>
<dbReference type="PANTHER" id="PTHR24286:SF255">
    <property type="entry name" value="ALLENE OXIDE SYNTHASE, CHLOROPLASTIC"/>
    <property type="match status" value="1"/>
</dbReference>
<dbReference type="PANTHER" id="PTHR24286">
    <property type="entry name" value="CYTOCHROME P450 26"/>
    <property type="match status" value="1"/>
</dbReference>
<dbReference type="Pfam" id="PF00067">
    <property type="entry name" value="p450"/>
    <property type="match status" value="1"/>
</dbReference>
<dbReference type="PRINTS" id="PR00465">
    <property type="entry name" value="EP450IV"/>
</dbReference>
<dbReference type="SUPFAM" id="SSF48264">
    <property type="entry name" value="Cytochrome P450"/>
    <property type="match status" value="1"/>
</dbReference>
<sequence>MASSALNNLVAVNPNTLSPSPKSTPLPNTFSNLRRVSAFRPIKASLFGDSPIKIPGITSQPPPSSDETTLPIRQIPGDYGLPGIGPIQDRLDYFYNQGREEFFKSRLQKYKSTVYRANMPPGPFIASNPRVIVLLDAKSFPVLFDMSKVEKKDLFTGTYMPSTELTGGYRILSYLDPSEPNHTKLKQLLFNLIKNRRDYVIPEFSSSFTDLCEVVEYDLATKGKAAFNDPAEQAAFNFLSRAFFGVKPIDTPLGKDAPSLISKWVLFNLAPILSVGLPKEVEEATLHSVRLPPLLVQNDYHRLYEFFTSAAGSVLDEAEQSGISRDEACHNILFAVCFNSWGGFKILFPSLMKWIGRAGLELHTKLAQEIRSAIQSTGGGKVTMAAMEQMPLMKSVVYETLRIEPPVALQYGKAKKDFILESHEAAYQVKEGEMLFGYQPFATKDPKIFDRPEEFVADRFVGEGVKLMEYVMWSNGPETETPSVANKQCAGKDFVVMAARLFVVELFKRYDSFDIEVGTSSLGASITLTSLKRSTF</sequence>